<keyword id="KW-0878">Amphibian defense peptide</keyword>
<keyword id="KW-0044">Antibiotic</keyword>
<keyword id="KW-0929">Antimicrobial</keyword>
<keyword id="KW-0903">Direct protein sequencing</keyword>
<keyword id="KW-0295">Fungicide</keyword>
<keyword id="KW-0379">Hydroxylation</keyword>
<keyword id="KW-0391">Immunity</keyword>
<keyword id="KW-0399">Innate immunity</keyword>
<keyword id="KW-0446">Lipid-binding</keyword>
<keyword id="KW-0964">Secreted</keyword>
<proteinExistence type="evidence at protein level"/>
<organism>
    <name type="scientific">Sphaenorhynchus lacteus</name>
    <name type="common">Orinoco lime treefrog</name>
    <name type="synonym">Hyla lactea</name>
    <dbReference type="NCBI Taxonomy" id="279984"/>
    <lineage>
        <taxon>Eukaryota</taxon>
        <taxon>Metazoa</taxon>
        <taxon>Chordata</taxon>
        <taxon>Craniata</taxon>
        <taxon>Vertebrata</taxon>
        <taxon>Euteleostomi</taxon>
        <taxon>Amphibia</taxon>
        <taxon>Batrachia</taxon>
        <taxon>Anura</taxon>
        <taxon>Neobatrachia</taxon>
        <taxon>Hyloidea</taxon>
        <taxon>Hylidae</taxon>
        <taxon>Hylinae</taxon>
        <taxon>Dendropsophini</taxon>
        <taxon>Sphaenorhynchus</taxon>
    </lineage>
</organism>
<reference key="1">
    <citation type="journal article" date="2018" name="Int. J. Mol. Sci.">
        <title>Unveiling the multifaceted mechanisms of antibacterial activity of buforin II and frenatin 2.3S peptides from skin micro-organs of the Orinoco lime treefrog (Sphaenorhynchus lacteus).</title>
        <authorList>
            <person name="Munoz-Camargo C."/>
            <person name="Salazar V.A."/>
            <person name="Barrero-Guevara L."/>
            <person name="Camargo S."/>
            <person name="Mosquera A."/>
            <person name="Groot H."/>
            <person name="Boix E."/>
        </authorList>
    </citation>
    <scope>PROTEIN SEQUENCE</scope>
    <scope>FUNCTION</scope>
    <scope>SUBCELLULAR LOCATION</scope>
    <source>
        <tissue>Skin</tissue>
    </source>
</reference>
<dbReference type="GO" id="GO:0005576">
    <property type="term" value="C:extracellular region"/>
    <property type="evidence" value="ECO:0007669"/>
    <property type="project" value="UniProtKB-SubCell"/>
</dbReference>
<dbReference type="GO" id="GO:0008289">
    <property type="term" value="F:lipid binding"/>
    <property type="evidence" value="ECO:0007669"/>
    <property type="project" value="UniProtKB-KW"/>
</dbReference>
<dbReference type="GO" id="GO:0046982">
    <property type="term" value="F:protein heterodimerization activity"/>
    <property type="evidence" value="ECO:0007669"/>
    <property type="project" value="InterPro"/>
</dbReference>
<dbReference type="GO" id="GO:0042742">
    <property type="term" value="P:defense response to bacterium"/>
    <property type="evidence" value="ECO:0007669"/>
    <property type="project" value="UniProtKB-KW"/>
</dbReference>
<dbReference type="GO" id="GO:0050832">
    <property type="term" value="P:defense response to fungus"/>
    <property type="evidence" value="ECO:0007669"/>
    <property type="project" value="UniProtKB-KW"/>
</dbReference>
<dbReference type="GO" id="GO:0045087">
    <property type="term" value="P:innate immune response"/>
    <property type="evidence" value="ECO:0007669"/>
    <property type="project" value="UniProtKB-KW"/>
</dbReference>
<dbReference type="GO" id="GO:0031640">
    <property type="term" value="P:killing of cells of another organism"/>
    <property type="evidence" value="ECO:0007669"/>
    <property type="project" value="UniProtKB-KW"/>
</dbReference>
<dbReference type="Gene3D" id="1.10.20.10">
    <property type="entry name" value="Histone, subunit A"/>
    <property type="match status" value="1"/>
</dbReference>
<dbReference type="InterPro" id="IPR009072">
    <property type="entry name" value="Histone-fold"/>
</dbReference>
<dbReference type="InterPro" id="IPR032458">
    <property type="entry name" value="Histone_H2A_CS"/>
</dbReference>
<dbReference type="SUPFAM" id="SSF47113">
    <property type="entry name" value="Histone-fold"/>
    <property type="match status" value="1"/>
</dbReference>
<dbReference type="PROSITE" id="PS00046">
    <property type="entry name" value="HISTONE_H2A"/>
    <property type="match status" value="1"/>
</dbReference>
<accession>P0DQL2</accession>
<feature type="peptide" id="PRO_0000450278" description="Buforin-2" evidence="3">
    <location>
        <begin position="1"/>
        <end position="21"/>
    </location>
</feature>
<feature type="modified residue" description="N6-(2-hydroxyisobutyryl)lysine; alternate" evidence="1">
    <location>
        <position position="21"/>
    </location>
</feature>
<comment type="function">
    <text evidence="3">Antimicrobial peptide with potent activity against some Gram-positive and Gram-negative bacteria (PubMed:30044391). Does not permeabilize membrane, but internalizes into bacterial cells and alter specific gene expression involved in bacterial resistance mechanisms (PubMed:30044391). Has the ability to agglutinate E.coli, and lipid vesicles (PubMed:30044391). Shows a weak hemolytic activity, and is not cytotoxic to monocytes (PubMed:30044391).</text>
</comment>
<comment type="subcellular location">
    <subcellularLocation>
        <location evidence="3">Secreted</location>
    </subcellularLocation>
</comment>
<comment type="tissue specificity">
    <text evidence="6">Expressed by the skin glands.</text>
</comment>
<comment type="domain">
    <text evidence="2">Adopts a distorted helix spanning from residues Gly-7 to Pro-11 and a regular alpha-helix from Val-12 to Arg-20 in membrane mimetic environment, and a random structure in water.</text>
</comment>
<comment type="similarity">
    <text evidence="5">Belongs to the histone H2A family.</text>
</comment>
<comment type="online information" name="The antimicrobial peptide database">
    <link uri="https://wangapd3.com/database/query_output.php?ID=00308"/>
</comment>
<sequence>TRSSRAGLQFPVGRVHRLLRK</sequence>
<evidence type="ECO:0000250" key="1">
    <source>
        <dbReference type="UniProtKB" id="P0C0S8"/>
    </source>
</evidence>
<evidence type="ECO:0000250" key="2">
    <source>
        <dbReference type="UniProtKB" id="P55897"/>
    </source>
</evidence>
<evidence type="ECO:0000269" key="3">
    <source>
    </source>
</evidence>
<evidence type="ECO:0000303" key="4">
    <source>
    </source>
</evidence>
<evidence type="ECO:0000305" key="5"/>
<evidence type="ECO:0000305" key="6">
    <source>
    </source>
</evidence>
<protein>
    <recommendedName>
        <fullName evidence="5">Buforin-2</fullName>
        <shortName evidence="4">BF2</shortName>
    </recommendedName>
    <alternativeName>
        <fullName evidence="4">Buforin II</fullName>
    </alternativeName>
</protein>
<name>H2A_SPHLA</name>